<feature type="chain" id="PRO_0000128307" description="T-complex protein 1 subunit alpha">
    <location>
        <begin position="1"/>
        <end position="559"/>
    </location>
</feature>
<feature type="binding site" evidence="1">
    <location>
        <position position="40"/>
    </location>
    <ligand>
        <name>ADP</name>
        <dbReference type="ChEBI" id="CHEBI:456216"/>
    </ligand>
</feature>
<feature type="binding site" evidence="1">
    <location>
        <position position="40"/>
    </location>
    <ligand>
        <name>ATP</name>
        <dbReference type="ChEBI" id="CHEBI:30616"/>
    </ligand>
</feature>
<feature type="binding site" evidence="1">
    <location>
        <position position="91"/>
    </location>
    <ligand>
        <name>Mg(2+)</name>
        <dbReference type="ChEBI" id="CHEBI:18420"/>
    </ligand>
</feature>
<feature type="binding site" evidence="1">
    <location>
        <position position="92"/>
    </location>
    <ligand>
        <name>ADP</name>
        <dbReference type="ChEBI" id="CHEBI:456216"/>
    </ligand>
</feature>
<feature type="binding site" evidence="1">
    <location>
        <position position="92"/>
    </location>
    <ligand>
        <name>ATP</name>
        <dbReference type="ChEBI" id="CHEBI:30616"/>
    </ligand>
</feature>
<feature type="binding site" evidence="1">
    <location>
        <position position="93"/>
    </location>
    <ligand>
        <name>ADP</name>
        <dbReference type="ChEBI" id="CHEBI:456216"/>
    </ligand>
</feature>
<feature type="binding site" evidence="1">
    <location>
        <position position="93"/>
    </location>
    <ligand>
        <name>ATP</name>
        <dbReference type="ChEBI" id="CHEBI:30616"/>
    </ligand>
</feature>
<feature type="binding site" evidence="1">
    <location>
        <position position="94"/>
    </location>
    <ligand>
        <name>ADP</name>
        <dbReference type="ChEBI" id="CHEBI:456216"/>
    </ligand>
</feature>
<feature type="binding site" evidence="1">
    <location>
        <position position="94"/>
    </location>
    <ligand>
        <name>ATP</name>
        <dbReference type="ChEBI" id="CHEBI:30616"/>
    </ligand>
</feature>
<feature type="binding site" evidence="1">
    <location>
        <position position="95"/>
    </location>
    <ligand>
        <name>ADP</name>
        <dbReference type="ChEBI" id="CHEBI:456216"/>
    </ligand>
</feature>
<feature type="binding site" evidence="1">
    <location>
        <position position="161"/>
    </location>
    <ligand>
        <name>ADP</name>
        <dbReference type="ChEBI" id="CHEBI:456216"/>
    </ligand>
</feature>
<feature type="binding site" evidence="1">
    <location>
        <position position="162"/>
    </location>
    <ligand>
        <name>ADP</name>
        <dbReference type="ChEBI" id="CHEBI:456216"/>
    </ligand>
</feature>
<feature type="binding site" evidence="1">
    <location>
        <position position="415"/>
    </location>
    <ligand>
        <name>ADP</name>
        <dbReference type="ChEBI" id="CHEBI:456216"/>
    </ligand>
</feature>
<feature type="binding site" evidence="1">
    <location>
        <position position="508"/>
    </location>
    <ligand>
        <name>ADP</name>
        <dbReference type="ChEBI" id="CHEBI:456216"/>
    </ligand>
</feature>
<evidence type="ECO:0000250" key="1">
    <source>
        <dbReference type="UniProtKB" id="P17987"/>
    </source>
</evidence>
<evidence type="ECO:0000305" key="2"/>
<dbReference type="EC" id="3.6.1.-" evidence="1"/>
<dbReference type="EMBL" id="AF143496">
    <property type="protein sequence ID" value="AAD34972.1"/>
    <property type="molecule type" value="mRNA"/>
</dbReference>
<dbReference type="SMR" id="Q9W790"/>
<dbReference type="GO" id="GO:0005829">
    <property type="term" value="C:cytosol"/>
    <property type="evidence" value="ECO:0007669"/>
    <property type="project" value="UniProtKB-SubCell"/>
</dbReference>
<dbReference type="GO" id="GO:0005524">
    <property type="term" value="F:ATP binding"/>
    <property type="evidence" value="ECO:0007669"/>
    <property type="project" value="UniProtKB-KW"/>
</dbReference>
<dbReference type="GO" id="GO:0016887">
    <property type="term" value="F:ATP hydrolysis activity"/>
    <property type="evidence" value="ECO:0007669"/>
    <property type="project" value="InterPro"/>
</dbReference>
<dbReference type="GO" id="GO:0140662">
    <property type="term" value="F:ATP-dependent protein folding chaperone"/>
    <property type="evidence" value="ECO:0007669"/>
    <property type="project" value="InterPro"/>
</dbReference>
<dbReference type="GO" id="GO:0051082">
    <property type="term" value="F:unfolded protein binding"/>
    <property type="evidence" value="ECO:0007669"/>
    <property type="project" value="InterPro"/>
</dbReference>
<dbReference type="CDD" id="cd03335">
    <property type="entry name" value="TCP1_alpha"/>
    <property type="match status" value="1"/>
</dbReference>
<dbReference type="FunFam" id="3.50.7.10:FF:000009">
    <property type="entry name" value="T-complex protein 1 subunit alpha"/>
    <property type="match status" value="1"/>
</dbReference>
<dbReference type="FunFam" id="3.30.260.10:FF:000022">
    <property type="entry name" value="T-complex protein 1 subunit eta"/>
    <property type="match status" value="1"/>
</dbReference>
<dbReference type="FunFam" id="1.10.560.10:FF:000070">
    <property type="entry name" value="Uncharacterized protein"/>
    <property type="match status" value="1"/>
</dbReference>
<dbReference type="FunFam" id="3.30.260.10:FF:000040">
    <property type="entry name" value="Uncharacterized protein"/>
    <property type="match status" value="1"/>
</dbReference>
<dbReference type="Gene3D" id="3.50.7.10">
    <property type="entry name" value="GroEL"/>
    <property type="match status" value="1"/>
</dbReference>
<dbReference type="Gene3D" id="1.10.560.10">
    <property type="entry name" value="GroEL-like equatorial domain"/>
    <property type="match status" value="1"/>
</dbReference>
<dbReference type="Gene3D" id="3.30.260.10">
    <property type="entry name" value="TCP-1-like chaperonin intermediate domain"/>
    <property type="match status" value="1"/>
</dbReference>
<dbReference type="InterPro" id="IPR012715">
    <property type="entry name" value="Chap_CCT_alpha"/>
</dbReference>
<dbReference type="InterPro" id="IPR017998">
    <property type="entry name" value="Chaperone_TCP-1"/>
</dbReference>
<dbReference type="InterPro" id="IPR002194">
    <property type="entry name" value="Chaperonin_TCP-1_CS"/>
</dbReference>
<dbReference type="InterPro" id="IPR002423">
    <property type="entry name" value="Cpn60/GroEL/TCP-1"/>
</dbReference>
<dbReference type="InterPro" id="IPR027409">
    <property type="entry name" value="GroEL-like_apical_dom_sf"/>
</dbReference>
<dbReference type="InterPro" id="IPR027413">
    <property type="entry name" value="GROEL-like_equatorial_sf"/>
</dbReference>
<dbReference type="InterPro" id="IPR027410">
    <property type="entry name" value="TCP-1-like_intermed_sf"/>
</dbReference>
<dbReference type="InterPro" id="IPR053374">
    <property type="entry name" value="TCP-1_chaperonin"/>
</dbReference>
<dbReference type="InterPro" id="IPR054827">
    <property type="entry name" value="thermosome_alpha"/>
</dbReference>
<dbReference type="NCBIfam" id="TIGR02340">
    <property type="entry name" value="chap_CCT_alpha"/>
    <property type="match status" value="1"/>
</dbReference>
<dbReference type="NCBIfam" id="NF041082">
    <property type="entry name" value="thermosome_alpha"/>
    <property type="match status" value="1"/>
</dbReference>
<dbReference type="NCBIfam" id="NF041083">
    <property type="entry name" value="thermosome_beta"/>
    <property type="match status" value="1"/>
</dbReference>
<dbReference type="PANTHER" id="PTHR11353">
    <property type="entry name" value="CHAPERONIN"/>
    <property type="match status" value="1"/>
</dbReference>
<dbReference type="Pfam" id="PF00118">
    <property type="entry name" value="Cpn60_TCP1"/>
    <property type="match status" value="1"/>
</dbReference>
<dbReference type="PRINTS" id="PR00304">
    <property type="entry name" value="TCOMPLEXTCP1"/>
</dbReference>
<dbReference type="SUPFAM" id="SSF52029">
    <property type="entry name" value="GroEL apical domain-like"/>
    <property type="match status" value="1"/>
</dbReference>
<dbReference type="SUPFAM" id="SSF48592">
    <property type="entry name" value="GroEL equatorial domain-like"/>
    <property type="match status" value="1"/>
</dbReference>
<dbReference type="SUPFAM" id="SSF54849">
    <property type="entry name" value="GroEL-intermediate domain like"/>
    <property type="match status" value="1"/>
</dbReference>
<dbReference type="PROSITE" id="PS00750">
    <property type="entry name" value="TCP1_1"/>
    <property type="match status" value="1"/>
</dbReference>
<dbReference type="PROSITE" id="PS00751">
    <property type="entry name" value="TCP1_2"/>
    <property type="match status" value="1"/>
</dbReference>
<dbReference type="PROSITE" id="PS00995">
    <property type="entry name" value="TCP1_3"/>
    <property type="match status" value="1"/>
</dbReference>
<protein>
    <recommendedName>
        <fullName>T-complex protein 1 subunit alpha</fullName>
        <shortName>TCP-1-alpha</shortName>
        <ecNumber evidence="1">3.6.1.-</ecNumber>
    </recommendedName>
    <alternativeName>
        <fullName>CCT-alpha</fullName>
    </alternativeName>
</protein>
<gene>
    <name type="primary">TCP1</name>
    <name type="synonym">CCT1</name>
</gene>
<accession>Q9W790</accession>
<sequence length="559" mass="60385">MAALEGPLAVLGERSSGDTVRNQNVTAAATIANIVKSSLGPVGLDKMLVDDIGDVTITNDGATILKLLEVEHPAAKVLCELAELQDKEVGDGTTSVVIIAAELLKNSDELVKQKIHPTSIIGGYRLACKEAVRYINENLIINTDELGRDCLINSAKTSMSSKIIGIDGDFFASMVVDAASAVKYTDQKGQARYPINSINVLKAHGRSQKESILVNGYALNCVVGSQGMTKRIVNAKIACLDFSLQKTKMKLGVQVVITDPEKLDQIRQRESDITKERIQKILATGANVILTTGGIDDMCLKYFVDAGAMAVRRVLKKDLKRIAKASGATVCSTLANLEGEESFEASMLGQAEEVVQERVCDDELILIKNTKARTSASIILRGANDFMCDEMERSIHDALCVVKRVLESKSVVPGGGAVEAALSIYLENYATSMGSREQLAIAEFARSLLIIPNTLAVNAAQDATDLVAKLRAFHNEAQVNPERKNLKWIGLDLINGKPRDNKQAGVFEPTLVKTKSLKFATEAAITILRIDDLIKLHPESKDDKGGCYEDAVRSGALEE</sequence>
<reference key="1">
    <citation type="journal article" date="1999" name="Genetics">
        <title>Origin of gene overlap: the case of TCP1 and ACAT2.</title>
        <authorList>
            <person name="Shintani S."/>
            <person name="O'Huigin C."/>
            <person name="Toyosawa S."/>
            <person name="Michalova V."/>
            <person name="Klein J."/>
        </authorList>
    </citation>
    <scope>NUCLEOTIDE SEQUENCE [MRNA]</scope>
</reference>
<name>TCPA_PALPA</name>
<keyword id="KW-0067">ATP-binding</keyword>
<keyword id="KW-0143">Chaperone</keyword>
<keyword id="KW-0963">Cytoplasm</keyword>
<keyword id="KW-0206">Cytoskeleton</keyword>
<keyword id="KW-0378">Hydrolase</keyword>
<keyword id="KW-0460">Magnesium</keyword>
<keyword id="KW-0479">Metal-binding</keyword>
<keyword id="KW-0547">Nucleotide-binding</keyword>
<comment type="function">
    <text evidence="1">Component of the chaperonin-containing T-complex (TRiC), a molecular chaperone complex that assists the folding of actin, tubulin and other proteins upon ATP hydrolysis.</text>
</comment>
<comment type="catalytic activity">
    <reaction evidence="1">
        <text>ATP + H2O = ADP + phosphate + H(+)</text>
        <dbReference type="Rhea" id="RHEA:13065"/>
        <dbReference type="ChEBI" id="CHEBI:15377"/>
        <dbReference type="ChEBI" id="CHEBI:15378"/>
        <dbReference type="ChEBI" id="CHEBI:30616"/>
        <dbReference type="ChEBI" id="CHEBI:43474"/>
        <dbReference type="ChEBI" id="CHEBI:456216"/>
    </reaction>
</comment>
<comment type="subunit">
    <text evidence="1">Component of the chaperonin-containing T-complex (TRiC), a hexadecamer composed of two identical back-to-back stacked rings enclosing a protein folding chamber. Each ring is made up of eight different subunits: TCP1/CCT1, CCT2, CCT3, CCT4, CCT5, CCT6A/CCT6, CCT7, CCT8.</text>
</comment>
<comment type="subcellular location">
    <subcellularLocation>
        <location evidence="1">Cytoplasm</location>
        <location evidence="1">Cytosol</location>
    </subcellularLocation>
    <subcellularLocation>
        <location evidence="1">Cytoplasm</location>
        <location evidence="1">Cytoskeleton</location>
        <location evidence="1">Microtubule organizing center</location>
        <location evidence="1">Centrosome</location>
    </subcellularLocation>
</comment>
<comment type="similarity">
    <text evidence="2">Belongs to the TCP-1 chaperonin family.</text>
</comment>
<proteinExistence type="evidence at transcript level"/>
<organism>
    <name type="scientific">Paleosuchus palpebrosus</name>
    <name type="common">Cuvier's smooth-fronted caiman</name>
    <name type="synonym">Dwarf caiman</name>
    <dbReference type="NCBI Taxonomy" id="84099"/>
    <lineage>
        <taxon>Eukaryota</taxon>
        <taxon>Metazoa</taxon>
        <taxon>Chordata</taxon>
        <taxon>Craniata</taxon>
        <taxon>Vertebrata</taxon>
        <taxon>Euteleostomi</taxon>
        <taxon>Archelosauria</taxon>
        <taxon>Archosauria</taxon>
        <taxon>Crocodylia</taxon>
        <taxon>Alligatoridae</taxon>
        <taxon>Caimaninae</taxon>
        <taxon>Paleosuchus</taxon>
    </lineage>
</organism>